<name>HDDC2_XENLA</name>
<proteinExistence type="evidence at transcript level"/>
<feature type="chain" id="PRO_0000311392" description="5'-deoxynucleotidase HDDC2">
    <location>
        <begin position="1"/>
        <end position="201"/>
    </location>
</feature>
<feature type="domain" description="HD" evidence="3">
    <location>
        <begin position="43"/>
        <end position="145"/>
    </location>
</feature>
<feature type="binding site" evidence="2">
    <location>
        <position position="46"/>
    </location>
    <ligand>
        <name>a divalent metal cation</name>
        <dbReference type="ChEBI" id="CHEBI:60240"/>
        <label>1</label>
    </ligand>
</feature>
<feature type="binding site" evidence="2">
    <location>
        <position position="74"/>
    </location>
    <ligand>
        <name>a divalent metal cation</name>
        <dbReference type="ChEBI" id="CHEBI:60240"/>
        <label>1</label>
    </ligand>
</feature>
<feature type="binding site" evidence="2">
    <location>
        <position position="75"/>
    </location>
    <ligand>
        <name>a divalent metal cation</name>
        <dbReference type="ChEBI" id="CHEBI:60240"/>
        <label>1</label>
    </ligand>
</feature>
<feature type="binding site" evidence="2">
    <location>
        <position position="78"/>
    </location>
    <ligand>
        <name>a divalent metal cation</name>
        <dbReference type="ChEBI" id="CHEBI:60240"/>
        <label>2</label>
    </ligand>
</feature>
<feature type="binding site" evidence="2">
    <location>
        <position position="83"/>
    </location>
    <ligand>
        <name>a divalent metal cation</name>
        <dbReference type="ChEBI" id="CHEBI:60240"/>
        <label>2</label>
    </ligand>
</feature>
<feature type="binding site" evidence="2">
    <location>
        <position position="84"/>
    </location>
    <ligand>
        <name>a divalent metal cation</name>
        <dbReference type="ChEBI" id="CHEBI:60240"/>
        <label>2</label>
    </ligand>
</feature>
<feature type="binding site" evidence="2">
    <location>
        <position position="140"/>
    </location>
    <ligand>
        <name>a divalent metal cation</name>
        <dbReference type="ChEBI" id="CHEBI:60240"/>
        <label>1</label>
    </ligand>
</feature>
<sequence>MAAAGSCSSAGKSLLQFMKLVGQLKRVPRTGWIYRQVEKPESVSDHMYRMAVMAMLTEDRKLNKDRCIRLALVHDMAECIVGDIAPADNIAKEEKHRKEKAAMEHLTQLLPDNLKTEVYDLWEEYEHQFTAEAKFVKELDQCEMILQALEYEELEKRPGRLQDFYNSTAGKFKHPEIVQLVSAIYEERNSAIAENARTSQT</sequence>
<dbReference type="EC" id="3.1.3.89" evidence="1"/>
<dbReference type="EMBL" id="BC078480">
    <property type="protein sequence ID" value="AAH78480.1"/>
    <property type="molecule type" value="mRNA"/>
</dbReference>
<dbReference type="RefSeq" id="NP_001087264.1">
    <property type="nucleotide sequence ID" value="NM_001093795.2"/>
</dbReference>
<dbReference type="SMR" id="Q66L17"/>
<dbReference type="DNASU" id="447085"/>
<dbReference type="GeneID" id="447085"/>
<dbReference type="KEGG" id="xla:447085"/>
<dbReference type="AGR" id="Xenbase:XB-GENE-953495"/>
<dbReference type="CTD" id="447085"/>
<dbReference type="Xenbase" id="XB-GENE-953495">
    <property type="gene designation" value="hddc2.L"/>
</dbReference>
<dbReference type="OMA" id="TWRLCLM"/>
<dbReference type="OrthoDB" id="10254258at2759"/>
<dbReference type="Proteomes" id="UP000186698">
    <property type="component" value="Chromosome 5L"/>
</dbReference>
<dbReference type="Bgee" id="447085">
    <property type="expression patterns" value="Expressed in testis and 20 other cell types or tissues"/>
</dbReference>
<dbReference type="GO" id="GO:0005737">
    <property type="term" value="C:cytoplasm"/>
    <property type="evidence" value="ECO:0007669"/>
    <property type="project" value="TreeGrafter"/>
</dbReference>
<dbReference type="GO" id="GO:0002953">
    <property type="term" value="F:5'-deoxynucleotidase activity"/>
    <property type="evidence" value="ECO:0000318"/>
    <property type="project" value="GO_Central"/>
</dbReference>
<dbReference type="GO" id="GO:0046872">
    <property type="term" value="F:metal ion binding"/>
    <property type="evidence" value="ECO:0007669"/>
    <property type="project" value="UniProtKB-KW"/>
</dbReference>
<dbReference type="FunFam" id="1.10.3210.10:FF:000011">
    <property type="entry name" value="HD domain-containing protein 2"/>
    <property type="match status" value="1"/>
</dbReference>
<dbReference type="Gene3D" id="1.10.3210.10">
    <property type="entry name" value="Hypothetical protein af1432"/>
    <property type="match status" value="1"/>
</dbReference>
<dbReference type="InterPro" id="IPR003607">
    <property type="entry name" value="HD/PDEase_dom"/>
</dbReference>
<dbReference type="InterPro" id="IPR006674">
    <property type="entry name" value="HD_domain"/>
</dbReference>
<dbReference type="InterPro" id="IPR039356">
    <property type="entry name" value="YfbR/HDDC2"/>
</dbReference>
<dbReference type="PANTHER" id="PTHR11845">
    <property type="entry name" value="5'-DEOXYNUCLEOTIDASE HDDC2"/>
    <property type="match status" value="1"/>
</dbReference>
<dbReference type="PANTHER" id="PTHR11845:SF13">
    <property type="entry name" value="5'-DEOXYNUCLEOTIDASE HDDC2"/>
    <property type="match status" value="1"/>
</dbReference>
<dbReference type="Pfam" id="PF13023">
    <property type="entry name" value="HD_3"/>
    <property type="match status" value="1"/>
</dbReference>
<dbReference type="SMART" id="SM00471">
    <property type="entry name" value="HDc"/>
    <property type="match status" value="1"/>
</dbReference>
<dbReference type="SUPFAM" id="SSF109604">
    <property type="entry name" value="HD-domain/PDEase-like"/>
    <property type="match status" value="1"/>
</dbReference>
<dbReference type="PROSITE" id="PS51831">
    <property type="entry name" value="HD"/>
    <property type="match status" value="1"/>
</dbReference>
<protein>
    <recommendedName>
        <fullName>5'-deoxynucleotidase HDDC2</fullName>
        <ecNumber evidence="1">3.1.3.89</ecNumber>
    </recommendedName>
    <alternativeName>
        <fullName>HD domain-containing protein 2</fullName>
    </alternativeName>
</protein>
<keyword id="KW-0170">Cobalt</keyword>
<keyword id="KW-0378">Hydrolase</keyword>
<keyword id="KW-0460">Magnesium</keyword>
<keyword id="KW-0464">Manganese</keyword>
<keyword id="KW-0479">Metal-binding</keyword>
<keyword id="KW-1185">Reference proteome</keyword>
<comment type="function">
    <text evidence="1">Catalyzes the dephosphorylation of the nucleoside 5'-monophosphates deoxyadenosine monophosphate (dAMP), deoxycytidine monophosphate (dCMP), deoxyguanosine monophosphate (dGMP) and deoxythymidine monophosphate (dTMP).</text>
</comment>
<comment type="catalytic activity">
    <reaction evidence="1">
        <text>a 2'-deoxyribonucleoside 5'-phosphate + H2O = a 2'-deoxyribonucleoside + phosphate</text>
        <dbReference type="Rhea" id="RHEA:36167"/>
        <dbReference type="ChEBI" id="CHEBI:15377"/>
        <dbReference type="ChEBI" id="CHEBI:18274"/>
        <dbReference type="ChEBI" id="CHEBI:43474"/>
        <dbReference type="ChEBI" id="CHEBI:65317"/>
        <dbReference type="EC" id="3.1.3.89"/>
    </reaction>
</comment>
<comment type="cofactor">
    <cofactor evidence="1">
        <name>Mn(2+)</name>
        <dbReference type="ChEBI" id="CHEBI:29035"/>
    </cofactor>
    <cofactor evidence="1">
        <name>Co(2+)</name>
        <dbReference type="ChEBI" id="CHEBI:48828"/>
    </cofactor>
    <cofactor evidence="1">
        <name>Mg(2+)</name>
        <dbReference type="ChEBI" id="CHEBI:18420"/>
    </cofactor>
    <text evidence="1 2">Binds 2 divalent metal cations (By similarity). Shows activity with Mn(2+), Co(2+) and Mg(2+) but shows no activity with Zn(2+) (By similarity).</text>
</comment>
<comment type="subunit">
    <text evidence="1">Homodimer.</text>
</comment>
<comment type="similarity">
    <text evidence="4">Belongs to the HDDC2 family.</text>
</comment>
<organism>
    <name type="scientific">Xenopus laevis</name>
    <name type="common">African clawed frog</name>
    <dbReference type="NCBI Taxonomy" id="8355"/>
    <lineage>
        <taxon>Eukaryota</taxon>
        <taxon>Metazoa</taxon>
        <taxon>Chordata</taxon>
        <taxon>Craniata</taxon>
        <taxon>Vertebrata</taxon>
        <taxon>Euteleostomi</taxon>
        <taxon>Amphibia</taxon>
        <taxon>Batrachia</taxon>
        <taxon>Anura</taxon>
        <taxon>Pipoidea</taxon>
        <taxon>Pipidae</taxon>
        <taxon>Xenopodinae</taxon>
        <taxon>Xenopus</taxon>
        <taxon>Xenopus</taxon>
    </lineage>
</organism>
<reference key="1">
    <citation type="submission" date="2004-09" db="EMBL/GenBank/DDBJ databases">
        <authorList>
            <consortium name="NIH - Xenopus Gene Collection (XGC) project"/>
        </authorList>
    </citation>
    <scope>NUCLEOTIDE SEQUENCE [LARGE SCALE MRNA]</scope>
    <source>
        <tissue>Tadpole</tissue>
    </source>
</reference>
<evidence type="ECO:0000250" key="1">
    <source>
        <dbReference type="UniProtKB" id="P53144"/>
    </source>
</evidence>
<evidence type="ECO:0000250" key="2">
    <source>
        <dbReference type="UniProtKB" id="Q7Z4H3"/>
    </source>
</evidence>
<evidence type="ECO:0000255" key="3">
    <source>
        <dbReference type="PROSITE-ProRule" id="PRU01175"/>
    </source>
</evidence>
<evidence type="ECO:0000305" key="4"/>
<gene>
    <name type="primary">hddc2</name>
</gene>
<accession>Q66L17</accession>